<name>LGT_RHOJR</name>
<reference key="1">
    <citation type="journal article" date="2006" name="Proc. Natl. Acad. Sci. U.S.A.">
        <title>The complete genome of Rhodococcus sp. RHA1 provides insights into a catabolic powerhouse.</title>
        <authorList>
            <person name="McLeod M.P."/>
            <person name="Warren R.L."/>
            <person name="Hsiao W.W.L."/>
            <person name="Araki N."/>
            <person name="Myhre M."/>
            <person name="Fernandes C."/>
            <person name="Miyazawa D."/>
            <person name="Wong W."/>
            <person name="Lillquist A.L."/>
            <person name="Wang D."/>
            <person name="Dosanjh M."/>
            <person name="Hara H."/>
            <person name="Petrescu A."/>
            <person name="Morin R.D."/>
            <person name="Yang G."/>
            <person name="Stott J.M."/>
            <person name="Schein J.E."/>
            <person name="Shin H."/>
            <person name="Smailus D."/>
            <person name="Siddiqui A.S."/>
            <person name="Marra M.A."/>
            <person name="Jones S.J.M."/>
            <person name="Holt R."/>
            <person name="Brinkman F.S.L."/>
            <person name="Miyauchi K."/>
            <person name="Fukuda M."/>
            <person name="Davies J.E."/>
            <person name="Mohn W.W."/>
            <person name="Eltis L.D."/>
        </authorList>
    </citation>
    <scope>NUCLEOTIDE SEQUENCE [LARGE SCALE GENOMIC DNA]</scope>
    <source>
        <strain>RHA1</strain>
    </source>
</reference>
<organism>
    <name type="scientific">Rhodococcus jostii (strain RHA1)</name>
    <dbReference type="NCBI Taxonomy" id="101510"/>
    <lineage>
        <taxon>Bacteria</taxon>
        <taxon>Bacillati</taxon>
        <taxon>Actinomycetota</taxon>
        <taxon>Actinomycetes</taxon>
        <taxon>Mycobacteriales</taxon>
        <taxon>Nocardiaceae</taxon>
        <taxon>Rhodococcus</taxon>
    </lineage>
</organism>
<sequence length="359" mass="38428">MTSTVDVLAYIPSPPQGVWYVGPVALRAYALFIIVGIVVAIVWGDRRWVARGGEKGTVLDIAIWAVPFGLIGGRLYHVMTDWPTYFGEGGDPVDALKVWQGGLGIWGAVALGGVGAWIGCRRRGIPLPALGDAVAPAILLAQAIGRLGNYFNQELYGRETEVPWGLEIFERRNDVGQVSPQLIDGVSTGEVAFVVHPTFLYEALWNVLIVLLLVWVDRRFRIGHGRLFALYVAGYCAGRFWIELMRSDHASLIAGVRVNSFTSALVFVAALVYFFAATKGREDPAELRPADGGPVGGGGEPVDGEIAQKEPEKNVEDAGKDEGTSASEPVSDDKAASTASTGGEAGTKTIDSKKDDAND</sequence>
<evidence type="ECO:0000255" key="1">
    <source>
        <dbReference type="HAMAP-Rule" id="MF_01147"/>
    </source>
</evidence>
<evidence type="ECO:0000256" key="2">
    <source>
        <dbReference type="SAM" id="MobiDB-lite"/>
    </source>
</evidence>
<gene>
    <name evidence="1" type="primary">lgt</name>
    <name type="ordered locus">RHA1_ro01011</name>
</gene>
<keyword id="KW-1003">Cell membrane</keyword>
<keyword id="KW-0472">Membrane</keyword>
<keyword id="KW-0808">Transferase</keyword>
<keyword id="KW-0812">Transmembrane</keyword>
<keyword id="KW-1133">Transmembrane helix</keyword>
<protein>
    <recommendedName>
        <fullName evidence="1">Phosphatidylglycerol--prolipoprotein diacylglyceryl transferase</fullName>
        <ecNumber evidence="1">2.5.1.145</ecNumber>
    </recommendedName>
</protein>
<proteinExistence type="inferred from homology"/>
<dbReference type="EC" id="2.5.1.145" evidence="1"/>
<dbReference type="EMBL" id="CP000431">
    <property type="protein sequence ID" value="ABG92838.1"/>
    <property type="molecule type" value="Genomic_DNA"/>
</dbReference>
<dbReference type="RefSeq" id="WP_011594177.1">
    <property type="nucleotide sequence ID" value="NC_008268.1"/>
</dbReference>
<dbReference type="SMR" id="Q0SHZ8"/>
<dbReference type="KEGG" id="rha:RHA1_ro01011"/>
<dbReference type="PATRIC" id="fig|101510.16.peg.1030"/>
<dbReference type="eggNOG" id="COG0682">
    <property type="taxonomic scope" value="Bacteria"/>
</dbReference>
<dbReference type="HOGENOM" id="CLU_013386_2_0_11"/>
<dbReference type="OrthoDB" id="871140at2"/>
<dbReference type="UniPathway" id="UPA00664"/>
<dbReference type="Proteomes" id="UP000008710">
    <property type="component" value="Chromosome"/>
</dbReference>
<dbReference type="GO" id="GO:0005886">
    <property type="term" value="C:plasma membrane"/>
    <property type="evidence" value="ECO:0007669"/>
    <property type="project" value="UniProtKB-SubCell"/>
</dbReference>
<dbReference type="GO" id="GO:0008961">
    <property type="term" value="F:phosphatidylglycerol-prolipoprotein diacylglyceryl transferase activity"/>
    <property type="evidence" value="ECO:0007669"/>
    <property type="project" value="UniProtKB-UniRule"/>
</dbReference>
<dbReference type="GO" id="GO:0042158">
    <property type="term" value="P:lipoprotein biosynthetic process"/>
    <property type="evidence" value="ECO:0007669"/>
    <property type="project" value="UniProtKB-UniRule"/>
</dbReference>
<dbReference type="HAMAP" id="MF_01147">
    <property type="entry name" value="Lgt"/>
    <property type="match status" value="1"/>
</dbReference>
<dbReference type="InterPro" id="IPR001640">
    <property type="entry name" value="Lgt"/>
</dbReference>
<dbReference type="NCBIfam" id="TIGR00544">
    <property type="entry name" value="lgt"/>
    <property type="match status" value="1"/>
</dbReference>
<dbReference type="PANTHER" id="PTHR30589:SF0">
    <property type="entry name" value="PHOSPHATIDYLGLYCEROL--PROLIPOPROTEIN DIACYLGLYCERYL TRANSFERASE"/>
    <property type="match status" value="1"/>
</dbReference>
<dbReference type="PANTHER" id="PTHR30589">
    <property type="entry name" value="PROLIPOPROTEIN DIACYLGLYCERYL TRANSFERASE"/>
    <property type="match status" value="1"/>
</dbReference>
<dbReference type="Pfam" id="PF01790">
    <property type="entry name" value="LGT"/>
    <property type="match status" value="1"/>
</dbReference>
<dbReference type="PROSITE" id="PS01311">
    <property type="entry name" value="LGT"/>
    <property type="match status" value="1"/>
</dbReference>
<comment type="function">
    <text evidence="1">Catalyzes the transfer of the diacylglyceryl group from phosphatidylglycerol to the sulfhydryl group of the N-terminal cysteine of a prolipoprotein, the first step in the formation of mature lipoproteins.</text>
</comment>
<comment type="catalytic activity">
    <reaction evidence="1">
        <text>L-cysteinyl-[prolipoprotein] + a 1,2-diacyl-sn-glycero-3-phospho-(1'-sn-glycerol) = an S-1,2-diacyl-sn-glyceryl-L-cysteinyl-[prolipoprotein] + sn-glycerol 1-phosphate + H(+)</text>
        <dbReference type="Rhea" id="RHEA:56712"/>
        <dbReference type="Rhea" id="RHEA-COMP:14679"/>
        <dbReference type="Rhea" id="RHEA-COMP:14680"/>
        <dbReference type="ChEBI" id="CHEBI:15378"/>
        <dbReference type="ChEBI" id="CHEBI:29950"/>
        <dbReference type="ChEBI" id="CHEBI:57685"/>
        <dbReference type="ChEBI" id="CHEBI:64716"/>
        <dbReference type="ChEBI" id="CHEBI:140658"/>
        <dbReference type="EC" id="2.5.1.145"/>
    </reaction>
</comment>
<comment type="pathway">
    <text evidence="1">Protein modification; lipoprotein biosynthesis (diacylglyceryl transfer).</text>
</comment>
<comment type="subcellular location">
    <subcellularLocation>
        <location evidence="1">Cell membrane</location>
        <topology evidence="1">Multi-pass membrane protein</topology>
    </subcellularLocation>
</comment>
<comment type="similarity">
    <text evidence="1">Belongs to the Lgt family.</text>
</comment>
<feature type="chain" id="PRO_1000137450" description="Phosphatidylglycerol--prolipoprotein diacylglyceryl transferase">
    <location>
        <begin position="1"/>
        <end position="359"/>
    </location>
</feature>
<feature type="transmembrane region" description="Helical" evidence="1">
    <location>
        <begin position="24"/>
        <end position="44"/>
    </location>
</feature>
<feature type="transmembrane region" description="Helical" evidence="1">
    <location>
        <begin position="58"/>
        <end position="78"/>
    </location>
</feature>
<feature type="transmembrane region" description="Helical" evidence="1">
    <location>
        <begin position="98"/>
        <end position="118"/>
    </location>
</feature>
<feature type="transmembrane region" description="Helical" evidence="1">
    <location>
        <begin position="124"/>
        <end position="144"/>
    </location>
</feature>
<feature type="transmembrane region" description="Helical" evidence="1">
    <location>
        <begin position="193"/>
        <end position="213"/>
    </location>
</feature>
<feature type="transmembrane region" description="Helical" evidence="1">
    <location>
        <begin position="222"/>
        <end position="243"/>
    </location>
</feature>
<feature type="transmembrane region" description="Helical" evidence="1">
    <location>
        <begin position="258"/>
        <end position="278"/>
    </location>
</feature>
<feature type="region of interest" description="Disordered" evidence="2">
    <location>
        <begin position="284"/>
        <end position="359"/>
    </location>
</feature>
<feature type="compositionally biased region" description="Basic and acidic residues" evidence="2">
    <location>
        <begin position="306"/>
        <end position="323"/>
    </location>
</feature>
<feature type="compositionally biased region" description="Low complexity" evidence="2">
    <location>
        <begin position="336"/>
        <end position="349"/>
    </location>
</feature>
<feature type="compositionally biased region" description="Basic and acidic residues" evidence="2">
    <location>
        <begin position="350"/>
        <end position="359"/>
    </location>
</feature>
<feature type="binding site" evidence="1">
    <location>
        <position position="146"/>
    </location>
    <ligand>
        <name>a 1,2-diacyl-sn-glycero-3-phospho-(1'-sn-glycerol)</name>
        <dbReference type="ChEBI" id="CHEBI:64716"/>
    </ligand>
</feature>
<accession>Q0SHZ8</accession>